<reference key="1">
    <citation type="journal article" date="2006" name="Genome Res.">
        <title>Skewed genomic variability in strains of the toxigenic bacterial pathogen, Clostridium perfringens.</title>
        <authorList>
            <person name="Myers G.S.A."/>
            <person name="Rasko D.A."/>
            <person name="Cheung J.K."/>
            <person name="Ravel J."/>
            <person name="Seshadri R."/>
            <person name="DeBoy R.T."/>
            <person name="Ren Q."/>
            <person name="Varga J."/>
            <person name="Awad M.M."/>
            <person name="Brinkac L.M."/>
            <person name="Daugherty S.C."/>
            <person name="Haft D.H."/>
            <person name="Dodson R.J."/>
            <person name="Madupu R."/>
            <person name="Nelson W.C."/>
            <person name="Rosovitz M.J."/>
            <person name="Sullivan S.A."/>
            <person name="Khouri H."/>
            <person name="Dimitrov G.I."/>
            <person name="Watkins K.L."/>
            <person name="Mulligan S."/>
            <person name="Benton J."/>
            <person name="Radune D."/>
            <person name="Fisher D.J."/>
            <person name="Atkins H.S."/>
            <person name="Hiscox T."/>
            <person name="Jost B.H."/>
            <person name="Billington S.J."/>
            <person name="Songer J.G."/>
            <person name="McClane B.A."/>
            <person name="Titball R.W."/>
            <person name="Rood J.I."/>
            <person name="Melville S.B."/>
            <person name="Paulsen I.T."/>
        </authorList>
    </citation>
    <scope>NUCLEOTIDE SEQUENCE [LARGE SCALE GENOMIC DNA]</scope>
    <source>
        <strain>ATCC 13124 / DSM 756 / JCM 1290 / NCIMB 6125 / NCTC 8237 / S 107 / Type A</strain>
    </source>
</reference>
<name>Y1959_CLOP1</name>
<gene>
    <name type="ordered locus">CPF_1959</name>
</gene>
<proteinExistence type="inferred from homology"/>
<sequence length="122" mass="14252">MKKYNKSIGFYGEDLSAKFLKKEGYSILEKNFNCSSGEIDIIAIKDEIISFIEVKSRFSNSFGNPKESVTCSKQGRIINAAKYYLHVKKLYNYYIRFDVIEVNFHIDSSKYELNFLKDAFRV</sequence>
<comment type="similarity">
    <text evidence="1">Belongs to the UPF0102 family.</text>
</comment>
<feature type="chain" id="PRO_1000009206" description="UPF0102 protein CPF_1959">
    <location>
        <begin position="1"/>
        <end position="122"/>
    </location>
</feature>
<organism>
    <name type="scientific">Clostridium perfringens (strain ATCC 13124 / DSM 756 / JCM 1290 / NCIMB 6125 / NCTC 8237 / Type A)</name>
    <dbReference type="NCBI Taxonomy" id="195103"/>
    <lineage>
        <taxon>Bacteria</taxon>
        <taxon>Bacillati</taxon>
        <taxon>Bacillota</taxon>
        <taxon>Clostridia</taxon>
        <taxon>Eubacteriales</taxon>
        <taxon>Clostridiaceae</taxon>
        <taxon>Clostridium</taxon>
    </lineage>
</organism>
<protein>
    <recommendedName>
        <fullName evidence="1">UPF0102 protein CPF_1959</fullName>
    </recommendedName>
</protein>
<dbReference type="EMBL" id="CP000246">
    <property type="protein sequence ID" value="ABG84684.1"/>
    <property type="molecule type" value="Genomic_DNA"/>
</dbReference>
<dbReference type="RefSeq" id="WP_003458506.1">
    <property type="nucleotide sequence ID" value="NC_008261.1"/>
</dbReference>
<dbReference type="SMR" id="Q0TPP8"/>
<dbReference type="STRING" id="195103.CPF_1959"/>
<dbReference type="PaxDb" id="195103-CPF_1959"/>
<dbReference type="KEGG" id="cpf:CPF_1959"/>
<dbReference type="eggNOG" id="COG0792">
    <property type="taxonomic scope" value="Bacteria"/>
</dbReference>
<dbReference type="HOGENOM" id="CLU_115353_2_1_9"/>
<dbReference type="Proteomes" id="UP000001823">
    <property type="component" value="Chromosome"/>
</dbReference>
<dbReference type="GO" id="GO:0003676">
    <property type="term" value="F:nucleic acid binding"/>
    <property type="evidence" value="ECO:0007669"/>
    <property type="project" value="InterPro"/>
</dbReference>
<dbReference type="CDD" id="cd20736">
    <property type="entry name" value="PoNe_Nuclease"/>
    <property type="match status" value="1"/>
</dbReference>
<dbReference type="Gene3D" id="3.40.1350.10">
    <property type="match status" value="1"/>
</dbReference>
<dbReference type="HAMAP" id="MF_00048">
    <property type="entry name" value="UPF0102"/>
    <property type="match status" value="1"/>
</dbReference>
<dbReference type="InterPro" id="IPR011335">
    <property type="entry name" value="Restrct_endonuc-II-like"/>
</dbReference>
<dbReference type="InterPro" id="IPR011856">
    <property type="entry name" value="tRNA_endonuc-like_dom_sf"/>
</dbReference>
<dbReference type="InterPro" id="IPR003509">
    <property type="entry name" value="UPF0102_YraN-like"/>
</dbReference>
<dbReference type="NCBIfam" id="NF009150">
    <property type="entry name" value="PRK12497.1-3"/>
    <property type="match status" value="1"/>
</dbReference>
<dbReference type="NCBIfam" id="TIGR00252">
    <property type="entry name" value="YraN family protein"/>
    <property type="match status" value="1"/>
</dbReference>
<dbReference type="PANTHER" id="PTHR34039">
    <property type="entry name" value="UPF0102 PROTEIN YRAN"/>
    <property type="match status" value="1"/>
</dbReference>
<dbReference type="PANTHER" id="PTHR34039:SF1">
    <property type="entry name" value="UPF0102 PROTEIN YRAN"/>
    <property type="match status" value="1"/>
</dbReference>
<dbReference type="Pfam" id="PF02021">
    <property type="entry name" value="UPF0102"/>
    <property type="match status" value="1"/>
</dbReference>
<dbReference type="SUPFAM" id="SSF52980">
    <property type="entry name" value="Restriction endonuclease-like"/>
    <property type="match status" value="1"/>
</dbReference>
<evidence type="ECO:0000255" key="1">
    <source>
        <dbReference type="HAMAP-Rule" id="MF_00048"/>
    </source>
</evidence>
<accession>Q0TPP8</accession>